<comment type="function">
    <text evidence="1">Displays an antiviral effect against flaviviruses such as west Nile virus (WNV) in the presence of OAS1B.</text>
</comment>
<comment type="interaction">
    <interactant intactId="EBI-717672">
        <id>Q9NUQ8</id>
    </interactant>
    <interactant intactId="EBI-1215612">
        <id>O94868</id>
        <label>FCHSD2</label>
    </interactant>
    <organismsDiffer>false</organismsDiffer>
    <experiments>4</experiments>
</comment>
<comment type="interaction">
    <interactant intactId="EBI-717672">
        <id>Q9NUQ8</id>
    </interactant>
    <interactant intactId="EBI-719493">
        <id>P14373</id>
        <label>TRIM27</label>
    </interactant>
    <organismsDiffer>false</organismsDiffer>
    <experiments>7</experiments>
</comment>
<comment type="alternative products">
    <event type="alternative splicing"/>
    <isoform>
        <id>Q9NUQ8-1</id>
        <name>1</name>
        <sequence type="displayed"/>
    </isoform>
    <isoform>
        <id>Q9NUQ8-2</id>
        <name>2</name>
        <sequence type="described" ref="VSP_020142"/>
    </isoform>
</comment>
<comment type="similarity">
    <text evidence="6">Belongs to the ABC transporter superfamily. ABCF family. EF3 subfamily.</text>
</comment>
<comment type="caution">
    <text evidence="6">Lacks transmembrane domains and is probably not involved in transport.</text>
</comment>
<comment type="sequence caution" evidence="6">
    <conflict type="erroneous initiation">
        <sequence resource="EMBL-CDS" id="BAB14989"/>
    </conflict>
</comment>
<evidence type="ECO:0000250" key="1"/>
<evidence type="ECO:0000255" key="2">
    <source>
        <dbReference type="PROSITE-ProRule" id="PRU00434"/>
    </source>
</evidence>
<evidence type="ECO:0000256" key="3">
    <source>
        <dbReference type="SAM" id="MobiDB-lite"/>
    </source>
</evidence>
<evidence type="ECO:0000269" key="4">
    <source>
    </source>
</evidence>
<evidence type="ECO:0000303" key="5">
    <source>
    </source>
</evidence>
<evidence type="ECO:0000305" key="6"/>
<evidence type="ECO:0007744" key="7">
    <source>
    </source>
</evidence>
<evidence type="ECO:0007744" key="8">
    <source>
    </source>
</evidence>
<evidence type="ECO:0007744" key="9">
    <source>
    </source>
</evidence>
<evidence type="ECO:0007744" key="10">
    <source>
    </source>
</evidence>
<sequence>MATCAEILRSEFPEIDGQVFDYVTGVLHSGSADFESVDDLVEAVGELLQEVSGDSKDDAGIRAVCQRMYNTLRLAEPQSQGNSQVLLDAPIQLSKITENYDCGTKLPGLLKREQSSTVNAKKLEKAEARLKAKQEKRSEKDTLKTSNPLVLEEASASQAGSRKESRLESSGKNKSYDVRIENFDVSFGDRVLLAGADVNLAWGRRYGLVGRNGLGKTTLLKMLATRSLRVPAHISLLHVEQEVAGDDTPALQSVLESDSVREDLLRRERELTAQIAAGRAEGSEAAELAEIYAKLEEIEADKAPARASVILAGLGFTPKMQQQPTREFSGGWRMRLALARALFARPDLLLLDEPTNMLDVRAILWLENYLQTWPSTILVVSHDRNFLNAIATDIIHLHSQRLDGYRGDFETFIKSKQERLLNQQREYEAQQQYRQHIQVFIDRFRYNANRASQVQSKLKMLEKLPELKPVDKESEVVMKFPDGFEKFSPPILQLDEVDFYYDPKHVIFSRLSVSADLESRICVVGENGAGKSTMLKLLLGDLAPVRGIRHAHRNLKIGYFSQHHVEQLDLNVSAVELLARKFPGRPEEEYRHQLGRYGISGELAMRPLASLSGGQKSRVAFAQMTMPCPNFYILDEPTNHLDMETIEALGRALNNFRGGVILVSHDERFIRLVCRELWVCEGGGVTRVEGGFDQYRALLQEQFRREGFL</sequence>
<gene>
    <name type="primary">ABCF3</name>
</gene>
<keyword id="KW-0007">Acetylation</keyword>
<keyword id="KW-0025">Alternative splicing</keyword>
<keyword id="KW-0051">Antiviral defense</keyword>
<keyword id="KW-0067">ATP-binding</keyword>
<keyword id="KW-0547">Nucleotide-binding</keyword>
<keyword id="KW-0597">Phosphoprotein</keyword>
<keyword id="KW-1267">Proteomics identification</keyword>
<keyword id="KW-1185">Reference proteome</keyword>
<keyword id="KW-0677">Repeat</keyword>
<accession>Q9NUQ8</accession>
<accession>A8K241</accession>
<accession>Q86UA2</accession>
<accession>Q8NAN1</accession>
<accession>Q96GS8</accession>
<accession>Q9H7A8</accession>
<reference key="1">
    <citation type="journal article" date="2004" name="Nat. Genet.">
        <title>Complete sequencing and characterization of 21,243 full-length human cDNAs.</title>
        <authorList>
            <person name="Ota T."/>
            <person name="Suzuki Y."/>
            <person name="Nishikawa T."/>
            <person name="Otsuki T."/>
            <person name="Sugiyama T."/>
            <person name="Irie R."/>
            <person name="Wakamatsu A."/>
            <person name="Hayashi K."/>
            <person name="Sato H."/>
            <person name="Nagai K."/>
            <person name="Kimura K."/>
            <person name="Makita H."/>
            <person name="Sekine M."/>
            <person name="Obayashi M."/>
            <person name="Nishi T."/>
            <person name="Shibahara T."/>
            <person name="Tanaka T."/>
            <person name="Ishii S."/>
            <person name="Yamamoto J."/>
            <person name="Saito K."/>
            <person name="Kawai Y."/>
            <person name="Isono Y."/>
            <person name="Nakamura Y."/>
            <person name="Nagahari K."/>
            <person name="Murakami K."/>
            <person name="Yasuda T."/>
            <person name="Iwayanagi T."/>
            <person name="Wagatsuma M."/>
            <person name="Shiratori A."/>
            <person name="Sudo H."/>
            <person name="Hosoiri T."/>
            <person name="Kaku Y."/>
            <person name="Kodaira H."/>
            <person name="Kondo H."/>
            <person name="Sugawara M."/>
            <person name="Takahashi M."/>
            <person name="Kanda K."/>
            <person name="Yokoi T."/>
            <person name="Furuya T."/>
            <person name="Kikkawa E."/>
            <person name="Omura Y."/>
            <person name="Abe K."/>
            <person name="Kamihara K."/>
            <person name="Katsuta N."/>
            <person name="Sato K."/>
            <person name="Tanikawa M."/>
            <person name="Yamazaki M."/>
            <person name="Ninomiya K."/>
            <person name="Ishibashi T."/>
            <person name="Yamashita H."/>
            <person name="Murakawa K."/>
            <person name="Fujimori K."/>
            <person name="Tanai H."/>
            <person name="Kimata M."/>
            <person name="Watanabe M."/>
            <person name="Hiraoka S."/>
            <person name="Chiba Y."/>
            <person name="Ishida S."/>
            <person name="Ono Y."/>
            <person name="Takiguchi S."/>
            <person name="Watanabe S."/>
            <person name="Yosida M."/>
            <person name="Hotuta T."/>
            <person name="Kusano J."/>
            <person name="Kanehori K."/>
            <person name="Takahashi-Fujii A."/>
            <person name="Hara H."/>
            <person name="Tanase T.-O."/>
            <person name="Nomura Y."/>
            <person name="Togiya S."/>
            <person name="Komai F."/>
            <person name="Hara R."/>
            <person name="Takeuchi K."/>
            <person name="Arita M."/>
            <person name="Imose N."/>
            <person name="Musashino K."/>
            <person name="Yuuki H."/>
            <person name="Oshima A."/>
            <person name="Sasaki N."/>
            <person name="Aotsuka S."/>
            <person name="Yoshikawa Y."/>
            <person name="Matsunawa H."/>
            <person name="Ichihara T."/>
            <person name="Shiohata N."/>
            <person name="Sano S."/>
            <person name="Moriya S."/>
            <person name="Momiyama H."/>
            <person name="Satoh N."/>
            <person name="Takami S."/>
            <person name="Terashima Y."/>
            <person name="Suzuki O."/>
            <person name="Nakagawa S."/>
            <person name="Senoh A."/>
            <person name="Mizoguchi H."/>
            <person name="Goto Y."/>
            <person name="Shimizu F."/>
            <person name="Wakebe H."/>
            <person name="Hishigaki H."/>
            <person name="Watanabe T."/>
            <person name="Sugiyama A."/>
            <person name="Takemoto M."/>
            <person name="Kawakami B."/>
            <person name="Yamazaki M."/>
            <person name="Watanabe K."/>
            <person name="Kumagai A."/>
            <person name="Itakura S."/>
            <person name="Fukuzumi Y."/>
            <person name="Fujimori Y."/>
            <person name="Komiyama M."/>
            <person name="Tashiro H."/>
            <person name="Tanigami A."/>
            <person name="Fujiwara T."/>
            <person name="Ono T."/>
            <person name="Yamada K."/>
            <person name="Fujii Y."/>
            <person name="Ozaki K."/>
            <person name="Hirao M."/>
            <person name="Ohmori Y."/>
            <person name="Kawabata A."/>
            <person name="Hikiji T."/>
            <person name="Kobatake N."/>
            <person name="Inagaki H."/>
            <person name="Ikema Y."/>
            <person name="Okamoto S."/>
            <person name="Okitani R."/>
            <person name="Kawakami T."/>
            <person name="Noguchi S."/>
            <person name="Itoh T."/>
            <person name="Shigeta K."/>
            <person name="Senba T."/>
            <person name="Matsumura K."/>
            <person name="Nakajima Y."/>
            <person name="Mizuno T."/>
            <person name="Morinaga M."/>
            <person name="Sasaki M."/>
            <person name="Togashi T."/>
            <person name="Oyama M."/>
            <person name="Hata H."/>
            <person name="Watanabe M."/>
            <person name="Komatsu T."/>
            <person name="Mizushima-Sugano J."/>
            <person name="Satoh T."/>
            <person name="Shirai Y."/>
            <person name="Takahashi Y."/>
            <person name="Nakagawa K."/>
            <person name="Okumura K."/>
            <person name="Nagase T."/>
            <person name="Nomura N."/>
            <person name="Kikuchi H."/>
            <person name="Masuho Y."/>
            <person name="Yamashita R."/>
            <person name="Nakai K."/>
            <person name="Yada T."/>
            <person name="Nakamura Y."/>
            <person name="Ohara O."/>
            <person name="Isogai T."/>
            <person name="Sugano S."/>
        </authorList>
    </citation>
    <scope>NUCLEOTIDE SEQUENCE [LARGE SCALE MRNA] (ISOFORMS 1 AND 2)</scope>
    <scope>VARIANT LEU-503</scope>
    <source>
        <tissue>Placenta</tissue>
        <tissue>Subthalamic nucleus</tissue>
        <tissue>Vascular smooth muscle</tissue>
    </source>
</reference>
<reference key="2">
    <citation type="journal article" date="2004" name="Genome Res.">
        <title>The status, quality, and expansion of the NIH full-length cDNA project: the Mammalian Gene Collection (MGC).</title>
        <authorList>
            <consortium name="The MGC Project Team"/>
        </authorList>
    </citation>
    <scope>NUCLEOTIDE SEQUENCE [LARGE SCALE MRNA] (ISOFORM 1)</scope>
    <source>
        <tissue>Cervix</tissue>
        <tissue>Muscle</tissue>
        <tissue>Skin</tissue>
    </source>
</reference>
<reference key="3">
    <citation type="journal article" date="2008" name="Proc. Natl. Acad. Sci. U.S.A.">
        <title>A quantitative atlas of mitotic phosphorylation.</title>
        <authorList>
            <person name="Dephoure N."/>
            <person name="Zhou C."/>
            <person name="Villen J."/>
            <person name="Beausoleil S.A."/>
            <person name="Bakalarski C.E."/>
            <person name="Elledge S.J."/>
            <person name="Gygi S.P."/>
        </authorList>
    </citation>
    <scope>PHOSPHORYLATION [LARGE SCALE ANALYSIS] AT SER-283</scope>
    <scope>IDENTIFICATION BY MASS SPECTROMETRY [LARGE SCALE ANALYSIS]</scope>
    <source>
        <tissue>Cervix carcinoma</tissue>
    </source>
</reference>
<reference key="4">
    <citation type="journal article" date="2011" name="BMC Syst. Biol.">
        <title>Initial characterization of the human central proteome.</title>
        <authorList>
            <person name="Burkard T.R."/>
            <person name="Planyavsky M."/>
            <person name="Kaupe I."/>
            <person name="Breitwieser F.P."/>
            <person name="Buerckstuemmer T."/>
            <person name="Bennett K.L."/>
            <person name="Superti-Furga G."/>
            <person name="Colinge J."/>
        </authorList>
    </citation>
    <scope>IDENTIFICATION BY MASS SPECTROMETRY [LARGE SCALE ANALYSIS]</scope>
</reference>
<reference key="5">
    <citation type="journal article" date="2012" name="Mol. Cell. Proteomics">
        <title>Comparative large-scale characterisation of plant vs. mammal proteins reveals similar and idiosyncratic N-alpha acetylation features.</title>
        <authorList>
            <person name="Bienvenut W.V."/>
            <person name="Sumpton D."/>
            <person name="Martinez A."/>
            <person name="Lilla S."/>
            <person name="Espagne C."/>
            <person name="Meinnel T."/>
            <person name="Giglione C."/>
        </authorList>
    </citation>
    <scope>ACETYLATION [LARGE SCALE ANALYSIS] AT ALA-2</scope>
    <scope>CLEAVAGE OF INITIATOR METHIONINE [LARGE SCALE ANALYSIS]</scope>
    <scope>IDENTIFICATION BY MASS SPECTROMETRY [LARGE SCALE ANALYSIS]</scope>
</reference>
<reference key="6">
    <citation type="journal article" date="2012" name="Proc. Natl. Acad. Sci. U.S.A.">
        <title>N-terminal acetylome analyses and functional insights of the N-terminal acetyltransferase NatB.</title>
        <authorList>
            <person name="Van Damme P."/>
            <person name="Lasa M."/>
            <person name="Polevoda B."/>
            <person name="Gazquez C."/>
            <person name="Elosegui-Artola A."/>
            <person name="Kim D.S."/>
            <person name="De Juan-Pardo E."/>
            <person name="Demeyer K."/>
            <person name="Hole K."/>
            <person name="Larrea E."/>
            <person name="Timmerman E."/>
            <person name="Prieto J."/>
            <person name="Arnesen T."/>
            <person name="Sherman F."/>
            <person name="Gevaert K."/>
            <person name="Aldabe R."/>
        </authorList>
    </citation>
    <scope>ACETYLATION [LARGE SCALE ANALYSIS] AT ALA-2</scope>
    <scope>CLEAVAGE OF INITIATOR METHIONINE [LARGE SCALE ANALYSIS]</scope>
    <scope>IDENTIFICATION BY MASS SPECTROMETRY [LARGE SCALE ANALYSIS]</scope>
</reference>
<reference key="7">
    <citation type="journal article" date="2013" name="J. Proteome Res.">
        <title>Toward a comprehensive characterization of a human cancer cell phosphoproteome.</title>
        <authorList>
            <person name="Zhou H."/>
            <person name="Di Palma S."/>
            <person name="Preisinger C."/>
            <person name="Peng M."/>
            <person name="Polat A.N."/>
            <person name="Heck A.J."/>
            <person name="Mohammed S."/>
        </authorList>
    </citation>
    <scope>PHOSPHORYLATION [LARGE SCALE ANALYSIS] AT SER-83; SER-155; SER-157; SER-161 AND SER-283</scope>
    <scope>IDENTIFICATION BY MASS SPECTROMETRY [LARGE SCALE ANALYSIS]</scope>
    <source>
        <tissue>Cervix carcinoma</tissue>
        <tissue>Erythroleukemia</tissue>
    </source>
</reference>
<protein>
    <recommendedName>
        <fullName>ATP-binding cassette sub-family F member 3</fullName>
    </recommendedName>
</protein>
<feature type="initiator methionine" description="Removed" evidence="8 9">
    <location>
        <position position="1"/>
    </location>
</feature>
<feature type="chain" id="PRO_0000248042" description="ATP-binding cassette sub-family F member 3">
    <location>
        <begin position="2"/>
        <end position="709"/>
    </location>
</feature>
<feature type="domain" description="ABC transporter 1" evidence="2">
    <location>
        <begin position="178"/>
        <end position="424"/>
    </location>
</feature>
<feature type="domain" description="ABC transporter 2" evidence="2">
    <location>
        <begin position="492"/>
        <end position="707"/>
    </location>
</feature>
<feature type="region of interest" description="Disordered" evidence="3">
    <location>
        <begin position="129"/>
        <end position="171"/>
    </location>
</feature>
<feature type="compositionally biased region" description="Basic and acidic residues" evidence="3">
    <location>
        <begin position="129"/>
        <end position="143"/>
    </location>
</feature>
<feature type="compositionally biased region" description="Basic and acidic residues" evidence="3">
    <location>
        <begin position="161"/>
        <end position="171"/>
    </location>
</feature>
<feature type="binding site" evidence="2">
    <location>
        <begin position="210"/>
        <end position="217"/>
    </location>
    <ligand>
        <name>ATP</name>
        <dbReference type="ChEBI" id="CHEBI:30616"/>
        <label>1</label>
    </ligand>
</feature>
<feature type="binding site" evidence="2">
    <location>
        <begin position="525"/>
        <end position="532"/>
    </location>
    <ligand>
        <name>ATP</name>
        <dbReference type="ChEBI" id="CHEBI:30616"/>
        <label>2</label>
    </ligand>
</feature>
<feature type="modified residue" description="N-acetylalanine" evidence="8 9">
    <location>
        <position position="2"/>
    </location>
</feature>
<feature type="modified residue" description="Phosphoserine" evidence="10">
    <location>
        <position position="83"/>
    </location>
</feature>
<feature type="modified residue" description="Phosphoserine" evidence="10">
    <location>
        <position position="155"/>
    </location>
</feature>
<feature type="modified residue" description="Phosphoserine" evidence="10">
    <location>
        <position position="157"/>
    </location>
</feature>
<feature type="modified residue" description="Phosphoserine" evidence="10">
    <location>
        <position position="161"/>
    </location>
</feature>
<feature type="modified residue" description="Phosphoserine" evidence="7 10">
    <location>
        <position position="283"/>
    </location>
</feature>
<feature type="splice variant" id="VSP_020142" description="In isoform 2." evidence="5">
    <location>
        <begin position="69"/>
        <end position="74"/>
    </location>
</feature>
<feature type="sequence variant" id="VAR_027247" description="In dbSNP:rs11706273." evidence="4">
    <original>P</original>
    <variation>L</variation>
    <location>
        <position position="503"/>
    </location>
</feature>
<feature type="sequence variant" id="VAR_027248" description="In dbSNP:rs9811715.">
    <original>R</original>
    <variation>H</variation>
    <location>
        <position position="510"/>
    </location>
</feature>
<feature type="sequence conflict" description="In Ref. 1; BAC03881." evidence="6" ref="1">
    <original>P</original>
    <variation>S</variation>
    <location>
        <position position="231"/>
    </location>
</feature>
<feature type="sequence conflict" description="In Ref. 1; BAB14989." evidence="6" ref="1">
    <original>A</original>
    <variation>G</variation>
    <location>
        <position position="289"/>
    </location>
</feature>
<feature type="sequence conflict" description="In Ref. 1; BAA92063." evidence="6" ref="1">
    <original>K</original>
    <variation>R</variation>
    <location>
        <position position="468"/>
    </location>
</feature>
<name>ABCF3_HUMAN</name>
<dbReference type="EMBL" id="AK002060">
    <property type="protein sequence ID" value="BAA92063.1"/>
    <property type="molecule type" value="mRNA"/>
</dbReference>
<dbReference type="EMBL" id="AK024758">
    <property type="protein sequence ID" value="BAB14989.1"/>
    <property type="status" value="ALT_INIT"/>
    <property type="molecule type" value="mRNA"/>
</dbReference>
<dbReference type="EMBL" id="AK092415">
    <property type="protein sequence ID" value="BAC03881.1"/>
    <property type="molecule type" value="mRNA"/>
</dbReference>
<dbReference type="EMBL" id="AK290106">
    <property type="protein sequence ID" value="BAF82795.1"/>
    <property type="molecule type" value="mRNA"/>
</dbReference>
<dbReference type="EMBL" id="BC009253">
    <property type="protein sequence ID" value="AAH09253.1"/>
    <property type="molecule type" value="mRNA"/>
</dbReference>
<dbReference type="EMBL" id="BC051754">
    <property type="protein sequence ID" value="AAH51754.1"/>
    <property type="molecule type" value="mRNA"/>
</dbReference>
<dbReference type="EMBL" id="BC051884">
    <property type="protein sequence ID" value="AAH51884.2"/>
    <property type="molecule type" value="mRNA"/>
</dbReference>
<dbReference type="CCDS" id="CCDS3254.1">
    <molecule id="Q9NUQ8-1"/>
</dbReference>
<dbReference type="CCDS" id="CCDS87173.1">
    <molecule id="Q9NUQ8-2"/>
</dbReference>
<dbReference type="RefSeq" id="NP_001338227.1">
    <molecule id="Q9NUQ8-2"/>
    <property type="nucleotide sequence ID" value="NM_001351298.2"/>
</dbReference>
<dbReference type="RefSeq" id="NP_060828.2">
    <molecule id="Q9NUQ8-1"/>
    <property type="nucleotide sequence ID" value="NM_018358.3"/>
</dbReference>
<dbReference type="SMR" id="Q9NUQ8"/>
<dbReference type="BioGRID" id="120605">
    <property type="interactions" value="152"/>
</dbReference>
<dbReference type="FunCoup" id="Q9NUQ8">
    <property type="interactions" value="1358"/>
</dbReference>
<dbReference type="IntAct" id="Q9NUQ8">
    <property type="interactions" value="96"/>
</dbReference>
<dbReference type="MINT" id="Q9NUQ8"/>
<dbReference type="STRING" id="9606.ENSP00000411471"/>
<dbReference type="TCDB" id="3.A.1.121.9">
    <property type="family name" value="the atp-binding cassette (abc) superfamily"/>
</dbReference>
<dbReference type="GlyGen" id="Q9NUQ8">
    <property type="glycosylation" value="2 sites, 1 N-linked glycan (1 site), 1 O-linked glycan (1 site)"/>
</dbReference>
<dbReference type="iPTMnet" id="Q9NUQ8"/>
<dbReference type="PhosphoSitePlus" id="Q9NUQ8"/>
<dbReference type="BioMuta" id="ABCF3"/>
<dbReference type="DMDM" id="114149223"/>
<dbReference type="jPOST" id="Q9NUQ8"/>
<dbReference type="MassIVE" id="Q9NUQ8"/>
<dbReference type="PaxDb" id="9606-ENSP00000411471"/>
<dbReference type="PeptideAtlas" id="Q9NUQ8"/>
<dbReference type="ProteomicsDB" id="82712">
    <molecule id="Q9NUQ8-1"/>
</dbReference>
<dbReference type="ProteomicsDB" id="82713">
    <molecule id="Q9NUQ8-2"/>
</dbReference>
<dbReference type="Pumba" id="Q9NUQ8"/>
<dbReference type="Antibodypedia" id="33796">
    <property type="antibodies" value="193 antibodies from 29 providers"/>
</dbReference>
<dbReference type="DNASU" id="55324"/>
<dbReference type="Ensembl" id="ENST00000292808.5">
    <molecule id="Q9NUQ8-2"/>
    <property type="protein sequence ID" value="ENSP00000292808.4"/>
    <property type="gene ID" value="ENSG00000161204.12"/>
</dbReference>
<dbReference type="Ensembl" id="ENST00000429586.7">
    <molecule id="Q9NUQ8-1"/>
    <property type="protein sequence ID" value="ENSP00000411471.2"/>
    <property type="gene ID" value="ENSG00000161204.12"/>
</dbReference>
<dbReference type="GeneID" id="55324"/>
<dbReference type="KEGG" id="hsa:55324"/>
<dbReference type="MANE-Select" id="ENST00000429586.7">
    <property type="protein sequence ID" value="ENSP00000411471.2"/>
    <property type="RefSeq nucleotide sequence ID" value="NM_018358.3"/>
    <property type="RefSeq protein sequence ID" value="NP_060828.2"/>
</dbReference>
<dbReference type="UCSC" id="uc003fmz.3">
    <molecule id="Q9NUQ8-1"/>
    <property type="organism name" value="human"/>
</dbReference>
<dbReference type="AGR" id="HGNC:72"/>
<dbReference type="CTD" id="55324"/>
<dbReference type="DisGeNET" id="55324"/>
<dbReference type="GeneCards" id="ABCF3"/>
<dbReference type="HGNC" id="HGNC:72">
    <property type="gene designation" value="ABCF3"/>
</dbReference>
<dbReference type="HPA" id="ENSG00000161204">
    <property type="expression patterns" value="Low tissue specificity"/>
</dbReference>
<dbReference type="MalaCards" id="ABCF3"/>
<dbReference type="MIM" id="618967">
    <property type="type" value="gene"/>
</dbReference>
<dbReference type="neXtProt" id="NX_Q9NUQ8"/>
<dbReference type="OpenTargets" id="ENSG00000161204"/>
<dbReference type="PharmGKB" id="PA24407"/>
<dbReference type="VEuPathDB" id="HostDB:ENSG00000161204"/>
<dbReference type="eggNOG" id="KOG0062">
    <property type="taxonomic scope" value="Eukaryota"/>
</dbReference>
<dbReference type="GeneTree" id="ENSGT00940000155604"/>
<dbReference type="HOGENOM" id="CLU_000604_36_6_1"/>
<dbReference type="InParanoid" id="Q9NUQ8"/>
<dbReference type="OMA" id="CTHIADI"/>
<dbReference type="OrthoDB" id="2110130at2759"/>
<dbReference type="PAN-GO" id="Q9NUQ8">
    <property type="GO annotations" value="1 GO annotation based on evolutionary models"/>
</dbReference>
<dbReference type="PhylomeDB" id="Q9NUQ8"/>
<dbReference type="TreeFam" id="TF105209"/>
<dbReference type="PathwayCommons" id="Q9NUQ8"/>
<dbReference type="SignaLink" id="Q9NUQ8"/>
<dbReference type="BioGRID-ORCS" id="55324">
    <property type="hits" value="9 hits in 1155 CRISPR screens"/>
</dbReference>
<dbReference type="CD-CODE" id="FB4E32DD">
    <property type="entry name" value="Presynaptic clusters and postsynaptic densities"/>
</dbReference>
<dbReference type="ChiTaRS" id="ABCF3">
    <property type="organism name" value="human"/>
</dbReference>
<dbReference type="GenomeRNAi" id="55324"/>
<dbReference type="Pharos" id="Q9NUQ8">
    <property type="development level" value="Tbio"/>
</dbReference>
<dbReference type="PRO" id="PR:Q9NUQ8"/>
<dbReference type="Proteomes" id="UP000005640">
    <property type="component" value="Chromosome 3"/>
</dbReference>
<dbReference type="RNAct" id="Q9NUQ8">
    <property type="molecule type" value="protein"/>
</dbReference>
<dbReference type="Bgee" id="ENSG00000161204">
    <property type="expression patterns" value="Expressed in right adrenal gland cortex and 170 other cell types or tissues"/>
</dbReference>
<dbReference type="ExpressionAtlas" id="Q9NUQ8">
    <property type="expression patterns" value="baseline and differential"/>
</dbReference>
<dbReference type="GO" id="GO:0016020">
    <property type="term" value="C:membrane"/>
    <property type="evidence" value="ECO:0007005"/>
    <property type="project" value="UniProtKB"/>
</dbReference>
<dbReference type="GO" id="GO:0005524">
    <property type="term" value="F:ATP binding"/>
    <property type="evidence" value="ECO:0000318"/>
    <property type="project" value="GO_Central"/>
</dbReference>
<dbReference type="GO" id="GO:0016887">
    <property type="term" value="F:ATP hydrolysis activity"/>
    <property type="evidence" value="ECO:0007669"/>
    <property type="project" value="InterPro"/>
</dbReference>
<dbReference type="GO" id="GO:0045296">
    <property type="term" value="F:cadherin binding"/>
    <property type="evidence" value="ECO:0007005"/>
    <property type="project" value="BHF-UCL"/>
</dbReference>
<dbReference type="GO" id="GO:0051607">
    <property type="term" value="P:defense response to virus"/>
    <property type="evidence" value="ECO:0007669"/>
    <property type="project" value="UniProtKB-KW"/>
</dbReference>
<dbReference type="CDD" id="cd03221">
    <property type="entry name" value="ABCF_EF-3"/>
    <property type="match status" value="2"/>
</dbReference>
<dbReference type="FunFam" id="3.40.50.300:FF:000104">
    <property type="entry name" value="ATP-binding cassette sub-family F member 3"/>
    <property type="match status" value="1"/>
</dbReference>
<dbReference type="FunFam" id="3.40.50.300:FF:000688">
    <property type="entry name" value="ATP-binding cassette sub-family F member 3"/>
    <property type="match status" value="1"/>
</dbReference>
<dbReference type="Gene3D" id="3.40.50.300">
    <property type="entry name" value="P-loop containing nucleotide triphosphate hydrolases"/>
    <property type="match status" value="2"/>
</dbReference>
<dbReference type="InterPro" id="IPR003593">
    <property type="entry name" value="AAA+_ATPase"/>
</dbReference>
<dbReference type="InterPro" id="IPR032781">
    <property type="entry name" value="ABC_tran_Xtn"/>
</dbReference>
<dbReference type="InterPro" id="IPR003439">
    <property type="entry name" value="ABC_transporter-like_ATP-bd"/>
</dbReference>
<dbReference type="InterPro" id="IPR017871">
    <property type="entry name" value="ABC_transporter-like_CS"/>
</dbReference>
<dbReference type="InterPro" id="IPR050611">
    <property type="entry name" value="ABCF_EF3_subfamily"/>
</dbReference>
<dbReference type="InterPro" id="IPR027417">
    <property type="entry name" value="P-loop_NTPase"/>
</dbReference>
<dbReference type="PANTHER" id="PTHR19211:SF117">
    <property type="entry name" value="ATP-BINDING CASSETTE SUB-FAMILY F MEMBER 3"/>
    <property type="match status" value="1"/>
</dbReference>
<dbReference type="PANTHER" id="PTHR19211">
    <property type="entry name" value="ATP-BINDING TRANSPORT PROTEIN-RELATED"/>
    <property type="match status" value="1"/>
</dbReference>
<dbReference type="Pfam" id="PF00005">
    <property type="entry name" value="ABC_tran"/>
    <property type="match status" value="2"/>
</dbReference>
<dbReference type="Pfam" id="PF12848">
    <property type="entry name" value="ABC_tran_Xtn"/>
    <property type="match status" value="1"/>
</dbReference>
<dbReference type="SMART" id="SM00382">
    <property type="entry name" value="AAA"/>
    <property type="match status" value="2"/>
</dbReference>
<dbReference type="SUPFAM" id="SSF52540">
    <property type="entry name" value="P-loop containing nucleoside triphosphate hydrolases"/>
    <property type="match status" value="2"/>
</dbReference>
<dbReference type="PROSITE" id="PS00211">
    <property type="entry name" value="ABC_TRANSPORTER_1"/>
    <property type="match status" value="2"/>
</dbReference>
<dbReference type="PROSITE" id="PS50893">
    <property type="entry name" value="ABC_TRANSPORTER_2"/>
    <property type="match status" value="2"/>
</dbReference>
<organism>
    <name type="scientific">Homo sapiens</name>
    <name type="common">Human</name>
    <dbReference type="NCBI Taxonomy" id="9606"/>
    <lineage>
        <taxon>Eukaryota</taxon>
        <taxon>Metazoa</taxon>
        <taxon>Chordata</taxon>
        <taxon>Craniata</taxon>
        <taxon>Vertebrata</taxon>
        <taxon>Euteleostomi</taxon>
        <taxon>Mammalia</taxon>
        <taxon>Eutheria</taxon>
        <taxon>Euarchontoglires</taxon>
        <taxon>Primates</taxon>
        <taxon>Haplorrhini</taxon>
        <taxon>Catarrhini</taxon>
        <taxon>Hominidae</taxon>
        <taxon>Homo</taxon>
    </lineage>
</organism>
<proteinExistence type="evidence at protein level"/>